<name>GHRA_ECO27</name>
<organism>
    <name type="scientific">Escherichia coli O127:H6 (strain E2348/69 / EPEC)</name>
    <dbReference type="NCBI Taxonomy" id="574521"/>
    <lineage>
        <taxon>Bacteria</taxon>
        <taxon>Pseudomonadati</taxon>
        <taxon>Pseudomonadota</taxon>
        <taxon>Gammaproteobacteria</taxon>
        <taxon>Enterobacterales</taxon>
        <taxon>Enterobacteriaceae</taxon>
        <taxon>Escherichia</taxon>
    </lineage>
</organism>
<feature type="chain" id="PRO_1000187262" description="Glyoxylate/hydroxypyruvate reductase A">
    <location>
        <begin position="1"/>
        <end position="312"/>
    </location>
</feature>
<feature type="active site" evidence="1">
    <location>
        <position position="227"/>
    </location>
</feature>
<feature type="active site" description="Proton donor" evidence="1">
    <location>
        <position position="275"/>
    </location>
</feature>
<comment type="function">
    <text evidence="1">Catalyzes the NADPH-dependent reduction of glyoxylate and hydroxypyruvate into glycolate and glycerate, respectively.</text>
</comment>
<comment type="catalytic activity">
    <reaction evidence="1">
        <text>glycolate + NADP(+) = glyoxylate + NADPH + H(+)</text>
        <dbReference type="Rhea" id="RHEA:10992"/>
        <dbReference type="ChEBI" id="CHEBI:15378"/>
        <dbReference type="ChEBI" id="CHEBI:29805"/>
        <dbReference type="ChEBI" id="CHEBI:36655"/>
        <dbReference type="ChEBI" id="CHEBI:57783"/>
        <dbReference type="ChEBI" id="CHEBI:58349"/>
        <dbReference type="EC" id="1.1.1.79"/>
    </reaction>
</comment>
<comment type="catalytic activity">
    <reaction evidence="1">
        <text>(R)-glycerate + NAD(+) = 3-hydroxypyruvate + NADH + H(+)</text>
        <dbReference type="Rhea" id="RHEA:17905"/>
        <dbReference type="ChEBI" id="CHEBI:15378"/>
        <dbReference type="ChEBI" id="CHEBI:16659"/>
        <dbReference type="ChEBI" id="CHEBI:17180"/>
        <dbReference type="ChEBI" id="CHEBI:57540"/>
        <dbReference type="ChEBI" id="CHEBI:57945"/>
        <dbReference type="EC" id="1.1.1.81"/>
    </reaction>
</comment>
<comment type="catalytic activity">
    <reaction evidence="1">
        <text>(R)-glycerate + NADP(+) = 3-hydroxypyruvate + NADPH + H(+)</text>
        <dbReference type="Rhea" id="RHEA:18657"/>
        <dbReference type="ChEBI" id="CHEBI:15378"/>
        <dbReference type="ChEBI" id="CHEBI:16659"/>
        <dbReference type="ChEBI" id="CHEBI:17180"/>
        <dbReference type="ChEBI" id="CHEBI:57783"/>
        <dbReference type="ChEBI" id="CHEBI:58349"/>
        <dbReference type="EC" id="1.1.1.81"/>
    </reaction>
</comment>
<comment type="subcellular location">
    <subcellularLocation>
        <location evidence="1">Cytoplasm</location>
    </subcellularLocation>
</comment>
<comment type="similarity">
    <text evidence="1">Belongs to the D-isomer specific 2-hydroxyacid dehydrogenase family. GhrA subfamily.</text>
</comment>
<gene>
    <name evidence="1" type="primary">ghrA</name>
    <name type="ordered locus">E2348C_1123</name>
</gene>
<reference key="1">
    <citation type="journal article" date="2009" name="J. Bacteriol.">
        <title>Complete genome sequence and comparative genome analysis of enteropathogenic Escherichia coli O127:H6 strain E2348/69.</title>
        <authorList>
            <person name="Iguchi A."/>
            <person name="Thomson N.R."/>
            <person name="Ogura Y."/>
            <person name="Saunders D."/>
            <person name="Ooka T."/>
            <person name="Henderson I.R."/>
            <person name="Harris D."/>
            <person name="Asadulghani M."/>
            <person name="Kurokawa K."/>
            <person name="Dean P."/>
            <person name="Kenny B."/>
            <person name="Quail M.A."/>
            <person name="Thurston S."/>
            <person name="Dougan G."/>
            <person name="Hayashi T."/>
            <person name="Parkhill J."/>
            <person name="Frankel G."/>
        </authorList>
    </citation>
    <scope>NUCLEOTIDE SEQUENCE [LARGE SCALE GENOMIC DNA]</scope>
    <source>
        <strain>E2348/69 / EPEC</strain>
    </source>
</reference>
<sequence length="312" mass="35338">MDIIFYHPTFDTQWWIEALHKAIPQARVRAWKSGDNESADYALVWHPPVEMLAGRDLKAVFALGAGVDSILSKLQAHPEMLKPSVPLFRLEDTGMGEQMQEYAVSQVLHWFRRFDDYRIQQNSSHWQPLPEYHREDFTIGILGAGVLGSKVAQSLQTWRFPLRCWSRTRKSWPGVQSFAGREELSAFLSQCRVLINLLPNTPETVGIINQQLLEKLPDGAYLLNLARGVHVVEDDLLAALDSGKVKGAMLDVFNREPLPPESPLWQHPRVTITPHVAAITRPAEAVDYISRTIAQLEKGERVCGQVDRARGY</sequence>
<evidence type="ECO:0000255" key="1">
    <source>
        <dbReference type="HAMAP-Rule" id="MF_01666"/>
    </source>
</evidence>
<accession>B7UP47</accession>
<proteinExistence type="inferred from homology"/>
<protein>
    <recommendedName>
        <fullName evidence="1">Glyoxylate/hydroxypyruvate reductase A</fullName>
        <ecNumber evidence="1">1.1.1.79</ecNumber>
        <ecNumber evidence="1">1.1.1.81</ecNumber>
    </recommendedName>
    <alternativeName>
        <fullName evidence="1">2-ketoacid reductase</fullName>
    </alternativeName>
</protein>
<keyword id="KW-0963">Cytoplasm</keyword>
<keyword id="KW-0520">NAD</keyword>
<keyword id="KW-0521">NADP</keyword>
<keyword id="KW-0560">Oxidoreductase</keyword>
<keyword id="KW-1185">Reference proteome</keyword>
<dbReference type="EC" id="1.1.1.79" evidence="1"/>
<dbReference type="EC" id="1.1.1.81" evidence="1"/>
<dbReference type="EMBL" id="FM180568">
    <property type="protein sequence ID" value="CAS08671.1"/>
    <property type="molecule type" value="Genomic_DNA"/>
</dbReference>
<dbReference type="RefSeq" id="WP_000351277.1">
    <property type="nucleotide sequence ID" value="NC_011601.1"/>
</dbReference>
<dbReference type="SMR" id="B7UP47"/>
<dbReference type="KEGG" id="ecg:E2348C_1123"/>
<dbReference type="HOGENOM" id="CLU_019796_1_0_6"/>
<dbReference type="Proteomes" id="UP000008205">
    <property type="component" value="Chromosome"/>
</dbReference>
<dbReference type="GO" id="GO:0005829">
    <property type="term" value="C:cytosol"/>
    <property type="evidence" value="ECO:0007669"/>
    <property type="project" value="UniProtKB-ARBA"/>
</dbReference>
<dbReference type="GO" id="GO:0030267">
    <property type="term" value="F:glyoxylate reductase (NADPH) activity"/>
    <property type="evidence" value="ECO:0007669"/>
    <property type="project" value="UniProtKB-UniRule"/>
</dbReference>
<dbReference type="GO" id="GO:0008465">
    <property type="term" value="F:hydroxypyruvate reductase (NADH) activity"/>
    <property type="evidence" value="ECO:0007669"/>
    <property type="project" value="RHEA"/>
</dbReference>
<dbReference type="GO" id="GO:0120509">
    <property type="term" value="F:hydroxypyruvate reductase (NADPH) activity"/>
    <property type="evidence" value="ECO:0007669"/>
    <property type="project" value="RHEA"/>
</dbReference>
<dbReference type="GO" id="GO:0051287">
    <property type="term" value="F:NAD binding"/>
    <property type="evidence" value="ECO:0007669"/>
    <property type="project" value="InterPro"/>
</dbReference>
<dbReference type="CDD" id="cd12164">
    <property type="entry name" value="GDH_like_2"/>
    <property type="match status" value="1"/>
</dbReference>
<dbReference type="FunFam" id="3.40.50.720:FF:000110">
    <property type="entry name" value="Glyoxylate/hydroxypyruvate reductase A"/>
    <property type="match status" value="1"/>
</dbReference>
<dbReference type="Gene3D" id="3.40.50.720">
    <property type="entry name" value="NAD(P)-binding Rossmann-like Domain"/>
    <property type="match status" value="2"/>
</dbReference>
<dbReference type="HAMAP" id="MF_01666">
    <property type="entry name" value="2_Hacid_dh_C_GhrA"/>
    <property type="match status" value="1"/>
</dbReference>
<dbReference type="InterPro" id="IPR029753">
    <property type="entry name" value="D-isomer_DH_CS"/>
</dbReference>
<dbReference type="InterPro" id="IPR006140">
    <property type="entry name" value="D-isomer_DH_NAD-bd"/>
</dbReference>
<dbReference type="InterPro" id="IPR023514">
    <property type="entry name" value="GhrA_Enterobacterales"/>
</dbReference>
<dbReference type="InterPro" id="IPR036291">
    <property type="entry name" value="NAD(P)-bd_dom_sf"/>
</dbReference>
<dbReference type="NCBIfam" id="NF012013">
    <property type="entry name" value="PRK15469.1"/>
    <property type="match status" value="1"/>
</dbReference>
<dbReference type="PANTHER" id="PTHR43333">
    <property type="entry name" value="2-HACID_DH_C DOMAIN-CONTAINING PROTEIN"/>
    <property type="match status" value="1"/>
</dbReference>
<dbReference type="PANTHER" id="PTHR43333:SF1">
    <property type="entry name" value="D-ISOMER SPECIFIC 2-HYDROXYACID DEHYDROGENASE NAD-BINDING DOMAIN-CONTAINING PROTEIN"/>
    <property type="match status" value="1"/>
</dbReference>
<dbReference type="Pfam" id="PF02826">
    <property type="entry name" value="2-Hacid_dh_C"/>
    <property type="match status" value="1"/>
</dbReference>
<dbReference type="SUPFAM" id="SSF51735">
    <property type="entry name" value="NAD(P)-binding Rossmann-fold domains"/>
    <property type="match status" value="1"/>
</dbReference>
<dbReference type="PROSITE" id="PS00671">
    <property type="entry name" value="D_2_HYDROXYACID_DH_3"/>
    <property type="match status" value="1"/>
</dbReference>